<feature type="chain" id="PRO_0000192268" description="Ribosomal protein L11 methyltransferase">
    <location>
        <begin position="1"/>
        <end position="329"/>
    </location>
</feature>
<feature type="binding site" evidence="1">
    <location>
        <position position="177"/>
    </location>
    <ligand>
        <name>S-adenosyl-L-methionine</name>
        <dbReference type="ChEBI" id="CHEBI:59789"/>
    </ligand>
</feature>
<feature type="binding site" evidence="1">
    <location>
        <position position="198"/>
    </location>
    <ligand>
        <name>S-adenosyl-L-methionine</name>
        <dbReference type="ChEBI" id="CHEBI:59789"/>
    </ligand>
</feature>
<feature type="binding site" evidence="1">
    <location>
        <position position="220"/>
    </location>
    <ligand>
        <name>S-adenosyl-L-methionine</name>
        <dbReference type="ChEBI" id="CHEBI:59789"/>
    </ligand>
</feature>
<feature type="binding site" evidence="1">
    <location>
        <position position="264"/>
    </location>
    <ligand>
        <name>S-adenosyl-L-methionine</name>
        <dbReference type="ChEBI" id="CHEBI:59789"/>
    </ligand>
</feature>
<sequence length="329" mass="37618">MLESMYYEFFFIFPKERELFESFLLDTTHLALEESSLENLKAFDDKETIEFVSQSSWRYFATHDPLKENLKEKPPHLKNFVILRSEKNLSDSLFPALEAFCLNLKQSLQSEFDFFYLSRNLASKDWLEAYKQAVLPVRCAKFYIHPSWHQKPSHAAIDDCIMIDPALAFGSGHHESTSMCLELLSSLDLKRKNALDVGCGSGILSIALKKQGVSALTACDTDSLAVEETLKNFSLNQIPLLAQDKVIYGSTQKIEGRFDIIVANLVADVIKSLYSEFVRLCNHTLILSGILETHLNSVLQIYYNGFEVLEQRQRNEWVALKLLKKQSIN</sequence>
<proteinExistence type="inferred from homology"/>
<comment type="function">
    <text evidence="1">Methylates ribosomal protein L11.</text>
</comment>
<comment type="catalytic activity">
    <reaction evidence="1">
        <text>L-lysyl-[protein] + 3 S-adenosyl-L-methionine = N(6),N(6),N(6)-trimethyl-L-lysyl-[protein] + 3 S-adenosyl-L-homocysteine + 3 H(+)</text>
        <dbReference type="Rhea" id="RHEA:54192"/>
        <dbReference type="Rhea" id="RHEA-COMP:9752"/>
        <dbReference type="Rhea" id="RHEA-COMP:13826"/>
        <dbReference type="ChEBI" id="CHEBI:15378"/>
        <dbReference type="ChEBI" id="CHEBI:29969"/>
        <dbReference type="ChEBI" id="CHEBI:57856"/>
        <dbReference type="ChEBI" id="CHEBI:59789"/>
        <dbReference type="ChEBI" id="CHEBI:61961"/>
    </reaction>
</comment>
<comment type="subcellular location">
    <subcellularLocation>
        <location evidence="1">Cytoplasm</location>
    </subcellularLocation>
</comment>
<comment type="similarity">
    <text evidence="1 2">Belongs to the methyltransferase superfamily. PrmA family.</text>
</comment>
<name>PRMA_HELPJ</name>
<organism>
    <name type="scientific">Helicobacter pylori (strain J99 / ATCC 700824)</name>
    <name type="common">Campylobacter pylori J99</name>
    <dbReference type="NCBI Taxonomy" id="85963"/>
    <lineage>
        <taxon>Bacteria</taxon>
        <taxon>Pseudomonadati</taxon>
        <taxon>Campylobacterota</taxon>
        <taxon>Epsilonproteobacteria</taxon>
        <taxon>Campylobacterales</taxon>
        <taxon>Helicobacteraceae</taxon>
        <taxon>Helicobacter</taxon>
    </lineage>
</organism>
<accession>Q9ZM65</accession>
<gene>
    <name evidence="1" type="primary">prmA</name>
    <name type="synonym">hsm</name>
    <name type="ordered locus">jhp_0357</name>
</gene>
<reference key="1">
    <citation type="journal article" date="1999" name="Nature">
        <title>Genomic sequence comparison of two unrelated isolates of the human gastric pathogen Helicobacter pylori.</title>
        <authorList>
            <person name="Alm R.A."/>
            <person name="Ling L.-S.L."/>
            <person name="Moir D.T."/>
            <person name="King B.L."/>
            <person name="Brown E.D."/>
            <person name="Doig P.C."/>
            <person name="Smith D.R."/>
            <person name="Noonan B."/>
            <person name="Guild B.C."/>
            <person name="deJonge B.L."/>
            <person name="Carmel G."/>
            <person name="Tummino P.J."/>
            <person name="Caruso A."/>
            <person name="Uria-Nickelsen M."/>
            <person name="Mills D.M."/>
            <person name="Ives C."/>
            <person name="Gibson R."/>
            <person name="Merberg D."/>
            <person name="Mills S.D."/>
            <person name="Jiang Q."/>
            <person name="Taylor D.E."/>
            <person name="Vovis G.F."/>
            <person name="Trust T.J."/>
        </authorList>
    </citation>
    <scope>NUCLEOTIDE SEQUENCE [LARGE SCALE GENOMIC DNA]</scope>
    <source>
        <strain>J99 / ATCC 700824</strain>
    </source>
</reference>
<keyword id="KW-0963">Cytoplasm</keyword>
<keyword id="KW-0489">Methyltransferase</keyword>
<keyword id="KW-0949">S-adenosyl-L-methionine</keyword>
<keyword id="KW-0808">Transferase</keyword>
<dbReference type="EC" id="2.1.1.-" evidence="1"/>
<dbReference type="EMBL" id="AE001439">
    <property type="protein sequence ID" value="AAD05931.1"/>
    <property type="molecule type" value="Genomic_DNA"/>
</dbReference>
<dbReference type="PIR" id="E71941">
    <property type="entry name" value="E71941"/>
</dbReference>
<dbReference type="SMR" id="Q9ZM65"/>
<dbReference type="KEGG" id="hpj:jhp_0357"/>
<dbReference type="PATRIC" id="fig|85963.30.peg.654"/>
<dbReference type="eggNOG" id="COG2264">
    <property type="taxonomic scope" value="Bacteria"/>
</dbReference>
<dbReference type="Proteomes" id="UP000000804">
    <property type="component" value="Chromosome"/>
</dbReference>
<dbReference type="GO" id="GO:0005737">
    <property type="term" value="C:cytoplasm"/>
    <property type="evidence" value="ECO:0007669"/>
    <property type="project" value="UniProtKB-SubCell"/>
</dbReference>
<dbReference type="GO" id="GO:0016279">
    <property type="term" value="F:protein-lysine N-methyltransferase activity"/>
    <property type="evidence" value="ECO:0007669"/>
    <property type="project" value="RHEA"/>
</dbReference>
<dbReference type="GO" id="GO:0032259">
    <property type="term" value="P:methylation"/>
    <property type="evidence" value="ECO:0007669"/>
    <property type="project" value="UniProtKB-KW"/>
</dbReference>
<dbReference type="CDD" id="cd02440">
    <property type="entry name" value="AdoMet_MTases"/>
    <property type="match status" value="1"/>
</dbReference>
<dbReference type="Gene3D" id="3.40.50.150">
    <property type="entry name" value="Vaccinia Virus protein VP39"/>
    <property type="match status" value="1"/>
</dbReference>
<dbReference type="HAMAP" id="MF_00735">
    <property type="entry name" value="Methyltr_PrmA"/>
    <property type="match status" value="1"/>
</dbReference>
<dbReference type="InterPro" id="IPR050078">
    <property type="entry name" value="Ribosomal_L11_MeTrfase_PrmA"/>
</dbReference>
<dbReference type="InterPro" id="IPR004498">
    <property type="entry name" value="Ribosomal_PrmA_MeTrfase"/>
</dbReference>
<dbReference type="InterPro" id="IPR029063">
    <property type="entry name" value="SAM-dependent_MTases_sf"/>
</dbReference>
<dbReference type="NCBIfam" id="TIGR00406">
    <property type="entry name" value="prmA"/>
    <property type="match status" value="1"/>
</dbReference>
<dbReference type="PANTHER" id="PTHR43648">
    <property type="entry name" value="ELECTRON TRANSFER FLAVOPROTEIN BETA SUBUNIT LYSINE METHYLTRANSFERASE"/>
    <property type="match status" value="1"/>
</dbReference>
<dbReference type="PANTHER" id="PTHR43648:SF1">
    <property type="entry name" value="ELECTRON TRANSFER FLAVOPROTEIN BETA SUBUNIT LYSINE METHYLTRANSFERASE"/>
    <property type="match status" value="1"/>
</dbReference>
<dbReference type="Pfam" id="PF06325">
    <property type="entry name" value="PrmA"/>
    <property type="match status" value="1"/>
</dbReference>
<dbReference type="PIRSF" id="PIRSF000401">
    <property type="entry name" value="RPL11_MTase"/>
    <property type="match status" value="1"/>
</dbReference>
<dbReference type="SUPFAM" id="SSF53335">
    <property type="entry name" value="S-adenosyl-L-methionine-dependent methyltransferases"/>
    <property type="match status" value="1"/>
</dbReference>
<protein>
    <recommendedName>
        <fullName evidence="1">Ribosomal protein L11 methyltransferase</fullName>
        <shortName evidence="1">L11 Mtase</shortName>
        <ecNumber evidence="1">2.1.1.-</ecNumber>
    </recommendedName>
</protein>
<evidence type="ECO:0000255" key="1">
    <source>
        <dbReference type="HAMAP-Rule" id="MF_00735"/>
    </source>
</evidence>
<evidence type="ECO:0000305" key="2"/>